<sequence>MSEEKLKSKIEQASGGLKEGAGKLTGDKELEAKGFVEKTIAKGKELADDAKEAVEGAVDAVKEKLK</sequence>
<protein>
    <recommendedName>
        <fullName>UPF0337 protein SPs1721</fullName>
    </recommendedName>
</protein>
<proteinExistence type="inferred from homology"/>
<evidence type="ECO:0000256" key="1">
    <source>
        <dbReference type="SAM" id="MobiDB-lite"/>
    </source>
</evidence>
<evidence type="ECO:0000305" key="2"/>
<comment type="similarity">
    <text evidence="2">Belongs to the UPF0337 (CsbD) family.</text>
</comment>
<reference key="1">
    <citation type="journal article" date="2003" name="Genome Res.">
        <title>Genome sequence of an M3 strain of Streptococcus pyogenes reveals a large-scale genomic rearrangement in invasive strains and new insights into phage evolution.</title>
        <authorList>
            <person name="Nakagawa I."/>
            <person name="Kurokawa K."/>
            <person name="Yamashita A."/>
            <person name="Nakata M."/>
            <person name="Tomiyasu Y."/>
            <person name="Okahashi N."/>
            <person name="Kawabata S."/>
            <person name="Yamazaki K."/>
            <person name="Shiba T."/>
            <person name="Yasunaga T."/>
            <person name="Hayashi H."/>
            <person name="Hattori M."/>
            <person name="Hamada S."/>
        </authorList>
    </citation>
    <scope>NUCLEOTIDE SEQUENCE [LARGE SCALE GENOMIC DNA]</scope>
    <source>
        <strain>SSI-1</strain>
    </source>
</reference>
<dbReference type="EMBL" id="BA000034">
    <property type="protein sequence ID" value="BAC64816.1"/>
    <property type="molecule type" value="Genomic_DNA"/>
</dbReference>
<dbReference type="RefSeq" id="WP_002982507.1">
    <property type="nucleotide sequence ID" value="NC_004606.1"/>
</dbReference>
<dbReference type="SMR" id="P0DH09"/>
<dbReference type="KEGG" id="sps:SPs1721"/>
<dbReference type="HOGENOM" id="CLU_135567_0_0_9"/>
<dbReference type="Gene3D" id="1.10.1470.10">
    <property type="entry name" value="YjbJ"/>
    <property type="match status" value="1"/>
</dbReference>
<dbReference type="InterPro" id="IPR008462">
    <property type="entry name" value="CsbD"/>
</dbReference>
<dbReference type="InterPro" id="IPR036629">
    <property type="entry name" value="YjbJ_sf"/>
</dbReference>
<dbReference type="Pfam" id="PF05532">
    <property type="entry name" value="CsbD"/>
    <property type="match status" value="1"/>
</dbReference>
<dbReference type="SUPFAM" id="SSF69047">
    <property type="entry name" value="Hypothetical protein YjbJ"/>
    <property type="match status" value="1"/>
</dbReference>
<feature type="chain" id="PRO_0000411644" description="UPF0337 protein SPs1721">
    <location>
        <begin position="1"/>
        <end position="66"/>
    </location>
</feature>
<feature type="region of interest" description="Disordered" evidence="1">
    <location>
        <begin position="1"/>
        <end position="23"/>
    </location>
</feature>
<feature type="compositionally biased region" description="Basic and acidic residues" evidence="1">
    <location>
        <begin position="1"/>
        <end position="10"/>
    </location>
</feature>
<accession>P0DH09</accession>
<accession>Q79W63</accession>
<accession>Q7CEN9</accession>
<gene>
    <name type="ordered locus">SPs1721</name>
</gene>
<organism>
    <name type="scientific">Streptococcus pyogenes serotype M3 (strain SSI-1)</name>
    <dbReference type="NCBI Taxonomy" id="193567"/>
    <lineage>
        <taxon>Bacteria</taxon>
        <taxon>Bacillati</taxon>
        <taxon>Bacillota</taxon>
        <taxon>Bacilli</taxon>
        <taxon>Lactobacillales</taxon>
        <taxon>Streptococcaceae</taxon>
        <taxon>Streptococcus</taxon>
    </lineage>
</organism>
<name>Y1723_STRPQ</name>